<organism>
    <name type="scientific">Raoultella terrigena</name>
    <name type="common">Klebsiella terrigena</name>
    <dbReference type="NCBI Taxonomy" id="577"/>
    <lineage>
        <taxon>Bacteria</taxon>
        <taxon>Pseudomonadati</taxon>
        <taxon>Pseudomonadota</taxon>
        <taxon>Gammaproteobacteria</taxon>
        <taxon>Enterobacterales</taxon>
        <taxon>Enterobacteriaceae</taxon>
        <taxon>Klebsiella/Raoultella group</taxon>
        <taxon>Raoultella</taxon>
    </lineage>
</organism>
<reference key="1">
    <citation type="journal article" date="1993" name="J. Bacteriol.">
        <title>Characterization of the genes of the 2,3-butanediol operons from Klebsiella terrigena and Enterobacter aerogenes.</title>
        <authorList>
            <person name="Blomqvist K."/>
            <person name="Nikkola M."/>
            <person name="Lehtovaara P."/>
            <person name="Suihko M.-L."/>
            <person name="Airaksinen U."/>
            <person name="Straby K.B."/>
            <person name="Knowles J.K.C."/>
            <person name="Penttilae M.E."/>
        </authorList>
    </citation>
    <scope>NUCLEOTIDE SEQUENCE [GENOMIC DNA]</scope>
    <source>
        <strain>VTT-E-74023</strain>
    </source>
</reference>
<sequence>MDKPRHERQWAHGADLIVSQLEAQGVRQVFGIPGAKIDKVFDSLLDSSIRIIPVRHEANAAFMAAAVGRITGKAGVALVTSGPGCSNLITGMATANSEGDPVVALGGAVKRADKAKLVHQSMDTVAMFSPVTKYAVEVTASDALAEVVSNAFRAAEQGRPGSAFVSLPQDIVDGPASGSTLPASRAPQMGAAPDGAVDSVAQAIAAAKNPIFLLGLMASQPENSRALHRHAGKKPYSGHQHLSGAGAVNQDNFARFAGRVGLFNNQAGDRLLRQADLIICIGYSPVEYEPAMWNSGTATLVHIDVLPAYEERNYVPDIELVGDIAATLEKLAQRIEHRLVLTPQAADILADRQRQRELLDRRGAQLNQFALHPLRIVRAMQDIVNSDVTLTVDMGSFHIWIARYLYSFRARQVMISNGQQTMGVALPWAIGAWLVNPQRKVVSVSGDGGFLQSSMELETAVRLHANILHIIWVDNGYNMVAIQEQKKYQRLSGVEFGPVDFKVYAEAFGACGFAVESAEALEPTLRAAMDVDGPAVVAIPVDYRDNPLLMGQLHLSQIL</sequence>
<gene>
    <name type="primary">budB</name>
</gene>
<accession>Q04524</accession>
<dbReference type="EC" id="2.2.1.6"/>
<dbReference type="EMBL" id="L04507">
    <property type="protein sequence ID" value="AAA25055.1"/>
    <property type="molecule type" value="Genomic_DNA"/>
</dbReference>
<dbReference type="PIR" id="D47069">
    <property type="entry name" value="D47069"/>
</dbReference>
<dbReference type="SMR" id="Q04524"/>
<dbReference type="UniPathway" id="UPA00626">
    <property type="reaction ID" value="UER00677"/>
</dbReference>
<dbReference type="GO" id="GO:0005948">
    <property type="term" value="C:acetolactate synthase complex"/>
    <property type="evidence" value="ECO:0007669"/>
    <property type="project" value="TreeGrafter"/>
</dbReference>
<dbReference type="GO" id="GO:0003984">
    <property type="term" value="F:acetolactate synthase activity"/>
    <property type="evidence" value="ECO:0007669"/>
    <property type="project" value="UniProtKB-EC"/>
</dbReference>
<dbReference type="GO" id="GO:0050660">
    <property type="term" value="F:flavin adenine dinucleotide binding"/>
    <property type="evidence" value="ECO:0007669"/>
    <property type="project" value="TreeGrafter"/>
</dbReference>
<dbReference type="GO" id="GO:0000287">
    <property type="term" value="F:magnesium ion binding"/>
    <property type="evidence" value="ECO:0007669"/>
    <property type="project" value="InterPro"/>
</dbReference>
<dbReference type="GO" id="GO:0030976">
    <property type="term" value="F:thiamine pyrophosphate binding"/>
    <property type="evidence" value="ECO:0007669"/>
    <property type="project" value="InterPro"/>
</dbReference>
<dbReference type="GO" id="GO:0034077">
    <property type="term" value="P:butanediol metabolic process"/>
    <property type="evidence" value="ECO:0007669"/>
    <property type="project" value="InterPro"/>
</dbReference>
<dbReference type="GO" id="GO:0009097">
    <property type="term" value="P:isoleucine biosynthetic process"/>
    <property type="evidence" value="ECO:0007669"/>
    <property type="project" value="TreeGrafter"/>
</dbReference>
<dbReference type="GO" id="GO:0009099">
    <property type="term" value="P:L-valine biosynthetic process"/>
    <property type="evidence" value="ECO:0007669"/>
    <property type="project" value="TreeGrafter"/>
</dbReference>
<dbReference type="CDD" id="cd07035">
    <property type="entry name" value="TPP_PYR_POX_like"/>
    <property type="match status" value="1"/>
</dbReference>
<dbReference type="FunFam" id="3.40.50.970:FF:000007">
    <property type="entry name" value="Acetolactate synthase"/>
    <property type="match status" value="1"/>
</dbReference>
<dbReference type="Gene3D" id="3.40.50.970">
    <property type="match status" value="2"/>
</dbReference>
<dbReference type="Gene3D" id="1.20.5.740">
    <property type="entry name" value="Single helix bin"/>
    <property type="match status" value="1"/>
</dbReference>
<dbReference type="Gene3D" id="3.40.50.1220">
    <property type="entry name" value="TPP-binding domain"/>
    <property type="match status" value="1"/>
</dbReference>
<dbReference type="InterPro" id="IPR012782">
    <property type="entry name" value="Acetolactate_synth_catblc"/>
</dbReference>
<dbReference type="InterPro" id="IPR029035">
    <property type="entry name" value="DHS-like_NAD/FAD-binding_dom"/>
</dbReference>
<dbReference type="InterPro" id="IPR029061">
    <property type="entry name" value="THDP-binding"/>
</dbReference>
<dbReference type="InterPro" id="IPR012000">
    <property type="entry name" value="Thiamin_PyroP_enz_cen_dom"/>
</dbReference>
<dbReference type="InterPro" id="IPR012001">
    <property type="entry name" value="Thiamin_PyroP_enz_TPP-bd_dom"/>
</dbReference>
<dbReference type="InterPro" id="IPR000399">
    <property type="entry name" value="TPP-bd_CS"/>
</dbReference>
<dbReference type="InterPro" id="IPR045229">
    <property type="entry name" value="TPP_enz"/>
</dbReference>
<dbReference type="InterPro" id="IPR011766">
    <property type="entry name" value="TPP_enzyme_TPP-bd"/>
</dbReference>
<dbReference type="NCBIfam" id="TIGR02418">
    <property type="entry name" value="acolac_catab"/>
    <property type="match status" value="1"/>
</dbReference>
<dbReference type="NCBIfam" id="NF006378">
    <property type="entry name" value="PRK08617.1"/>
    <property type="match status" value="1"/>
</dbReference>
<dbReference type="PANTHER" id="PTHR18968:SF129">
    <property type="entry name" value="ACETOLACTATE SYNTHASE"/>
    <property type="match status" value="1"/>
</dbReference>
<dbReference type="PANTHER" id="PTHR18968">
    <property type="entry name" value="THIAMINE PYROPHOSPHATE ENZYMES"/>
    <property type="match status" value="1"/>
</dbReference>
<dbReference type="Pfam" id="PF02775">
    <property type="entry name" value="TPP_enzyme_C"/>
    <property type="match status" value="1"/>
</dbReference>
<dbReference type="Pfam" id="PF00205">
    <property type="entry name" value="TPP_enzyme_M"/>
    <property type="match status" value="1"/>
</dbReference>
<dbReference type="Pfam" id="PF02776">
    <property type="entry name" value="TPP_enzyme_N"/>
    <property type="match status" value="1"/>
</dbReference>
<dbReference type="SUPFAM" id="SSF52467">
    <property type="entry name" value="DHS-like NAD/FAD-binding domain"/>
    <property type="match status" value="1"/>
</dbReference>
<dbReference type="SUPFAM" id="SSF52518">
    <property type="entry name" value="Thiamin diphosphate-binding fold (THDP-binding)"/>
    <property type="match status" value="2"/>
</dbReference>
<dbReference type="PROSITE" id="PS00187">
    <property type="entry name" value="TPP_ENZYMES"/>
    <property type="match status" value="1"/>
</dbReference>
<protein>
    <recommendedName>
        <fullName>Acetolactate synthase, catabolic</fullName>
        <shortName>ALS</shortName>
        <ecNumber>2.2.1.6</ecNumber>
    </recommendedName>
</protein>
<name>ILVB_RAOTE</name>
<feature type="chain" id="PRO_0000090798" description="Acetolactate synthase, catabolic">
    <location>
        <begin position="1"/>
        <end position="559"/>
    </location>
</feature>
<feature type="binding site" evidence="1">
    <location>
        <position position="159"/>
    </location>
    <ligand>
        <name>FAD</name>
        <dbReference type="ChEBI" id="CHEBI:57692"/>
    </ligand>
</feature>
<feature type="binding site" evidence="1">
    <location>
        <begin position="263"/>
        <end position="284"/>
    </location>
    <ligand>
        <name>FAD</name>
        <dbReference type="ChEBI" id="CHEBI:57692"/>
    </ligand>
</feature>
<feature type="binding site" evidence="1">
    <location>
        <begin position="304"/>
        <end position="323"/>
    </location>
    <ligand>
        <name>FAD</name>
        <dbReference type="ChEBI" id="CHEBI:57692"/>
    </ligand>
</feature>
<feature type="binding site" evidence="1">
    <location>
        <position position="447"/>
    </location>
    <ligand>
        <name>Mg(2+)</name>
        <dbReference type="ChEBI" id="CHEBI:18420"/>
    </ligand>
</feature>
<proteinExistence type="inferred from homology"/>
<evidence type="ECO:0000250" key="1"/>
<evidence type="ECO:0000305" key="2"/>
<keyword id="KW-0274">FAD</keyword>
<keyword id="KW-0285">Flavoprotein</keyword>
<keyword id="KW-0460">Magnesium</keyword>
<keyword id="KW-0479">Metal-binding</keyword>
<keyword id="KW-0786">Thiamine pyrophosphate</keyword>
<keyword id="KW-0808">Transferase</keyword>
<comment type="catalytic activity">
    <reaction>
        <text>2 pyruvate + H(+) = (2S)-2-acetolactate + CO2</text>
        <dbReference type="Rhea" id="RHEA:25249"/>
        <dbReference type="ChEBI" id="CHEBI:15361"/>
        <dbReference type="ChEBI" id="CHEBI:15378"/>
        <dbReference type="ChEBI" id="CHEBI:16526"/>
        <dbReference type="ChEBI" id="CHEBI:58476"/>
        <dbReference type="EC" id="2.2.1.6"/>
    </reaction>
</comment>
<comment type="pathway">
    <text>Polyol metabolism; (R,R)-butane-2,3-diol biosynthesis; (R,R)-butane-2,3-diol from pyruvate: step 1/3.</text>
</comment>
<comment type="subunit">
    <text>Homodimer.</text>
</comment>
<comment type="miscellaneous">
    <text evidence="1">Does not seem to require thiamine pyrophosphate.</text>
</comment>
<comment type="similarity">
    <text evidence="2">Belongs to the TPP enzyme family.</text>
</comment>